<sequence length="335" mass="35497">MKRIAIDAMGGDNAPKAIVEGVNQAIEAFSDIEIQLYGDQTKINSYLIQSDRVAIIHTDEKIMSDDEPAKAVRRKKKASMVLAAKAVKEGKADAIISAGNTGALLAVGLFVVGRIKGVDRPGLLSTIPTVTGLGFDMLDLGANAENTAKHLHQYAILGSFYAKNVRGIANPRVGLLNNGTEETKGDPLRKATYELLTADNTISFVGNVEARELMSGVADVIVSDGFTGNAVLKSIEGTAISIMGQLKQIINSGGIKTKIGASLLKSSLYEMKKTLDYSSAGGAVLFGLKAPVVKSHGSSDVKAIFSTIKQVRTMLDTNVVGQLVEEFAKETQVND</sequence>
<accession>B5XJ13</accession>
<organism>
    <name type="scientific">Streptococcus pyogenes serotype M49 (strain NZ131)</name>
    <dbReference type="NCBI Taxonomy" id="471876"/>
    <lineage>
        <taxon>Bacteria</taxon>
        <taxon>Bacillati</taxon>
        <taxon>Bacillota</taxon>
        <taxon>Bacilli</taxon>
        <taxon>Lactobacillales</taxon>
        <taxon>Streptococcaceae</taxon>
        <taxon>Streptococcus</taxon>
    </lineage>
</organism>
<protein>
    <recommendedName>
        <fullName evidence="1">Phosphate acyltransferase</fullName>
        <ecNumber evidence="1">2.3.1.274</ecNumber>
    </recommendedName>
    <alternativeName>
        <fullName evidence="1">Acyl-ACP phosphotransacylase</fullName>
    </alternativeName>
    <alternativeName>
        <fullName evidence="1">Acyl-[acyl-carrier-protein]--phosphate acyltransferase</fullName>
    </alternativeName>
    <alternativeName>
        <fullName evidence="1">Phosphate-acyl-ACP acyltransferase</fullName>
    </alternativeName>
</protein>
<keyword id="KW-0963">Cytoplasm</keyword>
<keyword id="KW-0444">Lipid biosynthesis</keyword>
<keyword id="KW-0443">Lipid metabolism</keyword>
<keyword id="KW-0594">Phospholipid biosynthesis</keyword>
<keyword id="KW-1208">Phospholipid metabolism</keyword>
<keyword id="KW-0808">Transferase</keyword>
<evidence type="ECO:0000255" key="1">
    <source>
        <dbReference type="HAMAP-Rule" id="MF_00019"/>
    </source>
</evidence>
<proteinExistence type="inferred from homology"/>
<reference key="1">
    <citation type="journal article" date="2008" name="J. Bacteriol.">
        <title>Genome sequence of a nephritogenic and highly transformable M49 strain of Streptococcus pyogenes.</title>
        <authorList>
            <person name="McShan W.M."/>
            <person name="Ferretti J.J."/>
            <person name="Karasawa T."/>
            <person name="Suvorov A.N."/>
            <person name="Lin S."/>
            <person name="Qin B."/>
            <person name="Jia H."/>
            <person name="Kenton S."/>
            <person name="Najar F."/>
            <person name="Wu H."/>
            <person name="Scott J."/>
            <person name="Roe B.A."/>
            <person name="Savic D.J."/>
        </authorList>
    </citation>
    <scope>NUCLEOTIDE SEQUENCE [LARGE SCALE GENOMIC DNA]</scope>
    <source>
        <strain>NZ131</strain>
    </source>
</reference>
<gene>
    <name evidence="1" type="primary">plsX</name>
    <name type="ordered locus">Spy49_0018</name>
</gene>
<dbReference type="EC" id="2.3.1.274" evidence="1"/>
<dbReference type="EMBL" id="CP000829">
    <property type="protein sequence ID" value="ACI60381.1"/>
    <property type="molecule type" value="Genomic_DNA"/>
</dbReference>
<dbReference type="SMR" id="B5XJ13"/>
<dbReference type="KEGG" id="soz:Spy49_0018"/>
<dbReference type="HOGENOM" id="CLU_039379_1_1_9"/>
<dbReference type="UniPathway" id="UPA00085"/>
<dbReference type="Proteomes" id="UP000001039">
    <property type="component" value="Chromosome"/>
</dbReference>
<dbReference type="GO" id="GO:0005737">
    <property type="term" value="C:cytoplasm"/>
    <property type="evidence" value="ECO:0007669"/>
    <property type="project" value="UniProtKB-SubCell"/>
</dbReference>
<dbReference type="GO" id="GO:0043811">
    <property type="term" value="F:phosphate:acyl-[acyl carrier protein] acyltransferase activity"/>
    <property type="evidence" value="ECO:0007669"/>
    <property type="project" value="UniProtKB-UniRule"/>
</dbReference>
<dbReference type="GO" id="GO:0006633">
    <property type="term" value="P:fatty acid biosynthetic process"/>
    <property type="evidence" value="ECO:0007669"/>
    <property type="project" value="UniProtKB-UniRule"/>
</dbReference>
<dbReference type="GO" id="GO:0008654">
    <property type="term" value="P:phospholipid biosynthetic process"/>
    <property type="evidence" value="ECO:0007669"/>
    <property type="project" value="UniProtKB-KW"/>
</dbReference>
<dbReference type="Gene3D" id="3.40.718.10">
    <property type="entry name" value="Isopropylmalate Dehydrogenase"/>
    <property type="match status" value="1"/>
</dbReference>
<dbReference type="HAMAP" id="MF_00019">
    <property type="entry name" value="PlsX"/>
    <property type="match status" value="1"/>
</dbReference>
<dbReference type="InterPro" id="IPR003664">
    <property type="entry name" value="FA_synthesis"/>
</dbReference>
<dbReference type="InterPro" id="IPR012281">
    <property type="entry name" value="Phospholipid_synth_PlsX-like"/>
</dbReference>
<dbReference type="NCBIfam" id="TIGR00182">
    <property type="entry name" value="plsX"/>
    <property type="match status" value="1"/>
</dbReference>
<dbReference type="PANTHER" id="PTHR30100">
    <property type="entry name" value="FATTY ACID/PHOSPHOLIPID SYNTHESIS PROTEIN PLSX"/>
    <property type="match status" value="1"/>
</dbReference>
<dbReference type="PANTHER" id="PTHR30100:SF1">
    <property type="entry name" value="PHOSPHATE ACYLTRANSFERASE"/>
    <property type="match status" value="1"/>
</dbReference>
<dbReference type="Pfam" id="PF02504">
    <property type="entry name" value="FA_synthesis"/>
    <property type="match status" value="1"/>
</dbReference>
<dbReference type="PIRSF" id="PIRSF002465">
    <property type="entry name" value="Phsphlp_syn_PlsX"/>
    <property type="match status" value="1"/>
</dbReference>
<dbReference type="SUPFAM" id="SSF53659">
    <property type="entry name" value="Isocitrate/Isopropylmalate dehydrogenase-like"/>
    <property type="match status" value="1"/>
</dbReference>
<name>PLSX_STRPZ</name>
<feature type="chain" id="PRO_1000089944" description="Phosphate acyltransferase">
    <location>
        <begin position="1"/>
        <end position="335"/>
    </location>
</feature>
<comment type="function">
    <text evidence="1">Catalyzes the reversible formation of acyl-phosphate (acyl-PO(4)) from acyl-[acyl-carrier-protein] (acyl-ACP). This enzyme utilizes acyl-ACP as fatty acyl donor, but not acyl-CoA.</text>
</comment>
<comment type="catalytic activity">
    <reaction evidence="1">
        <text>a fatty acyl-[ACP] + phosphate = an acyl phosphate + holo-[ACP]</text>
        <dbReference type="Rhea" id="RHEA:42292"/>
        <dbReference type="Rhea" id="RHEA-COMP:9685"/>
        <dbReference type="Rhea" id="RHEA-COMP:14125"/>
        <dbReference type="ChEBI" id="CHEBI:43474"/>
        <dbReference type="ChEBI" id="CHEBI:59918"/>
        <dbReference type="ChEBI" id="CHEBI:64479"/>
        <dbReference type="ChEBI" id="CHEBI:138651"/>
        <dbReference type="EC" id="2.3.1.274"/>
    </reaction>
</comment>
<comment type="pathway">
    <text evidence="1">Lipid metabolism; phospholipid metabolism.</text>
</comment>
<comment type="subunit">
    <text evidence="1">Homodimer. Probably interacts with PlsY.</text>
</comment>
<comment type="subcellular location">
    <subcellularLocation>
        <location evidence="1">Cytoplasm</location>
    </subcellularLocation>
    <text evidence="1">Associated with the membrane possibly through PlsY.</text>
</comment>
<comment type="similarity">
    <text evidence="1">Belongs to the PlsX family.</text>
</comment>